<feature type="chain" id="PRO_1000138934" description="Deoxyguanosinetriphosphate triphosphohydrolase-like protein">
    <location>
        <begin position="1"/>
        <end position="446"/>
    </location>
</feature>
<feature type="domain" description="HD" evidence="2">
    <location>
        <begin position="59"/>
        <end position="252"/>
    </location>
</feature>
<feature type="region of interest" description="Disordered" evidence="3">
    <location>
        <begin position="1"/>
        <end position="28"/>
    </location>
</feature>
<feature type="compositionally biased region" description="Basic and acidic residues" evidence="3">
    <location>
        <begin position="7"/>
        <end position="28"/>
    </location>
</feature>
<accession>Q0HVD3</accession>
<dbReference type="EMBL" id="CP000444">
    <property type="protein sequence ID" value="ABI42922.1"/>
    <property type="molecule type" value="Genomic_DNA"/>
</dbReference>
<dbReference type="SMR" id="Q0HVD3"/>
<dbReference type="KEGG" id="shm:Shewmr7_1933"/>
<dbReference type="HOGENOM" id="CLU_028163_0_0_6"/>
<dbReference type="GO" id="GO:0008832">
    <property type="term" value="F:dGTPase activity"/>
    <property type="evidence" value="ECO:0007669"/>
    <property type="project" value="TreeGrafter"/>
</dbReference>
<dbReference type="GO" id="GO:0006203">
    <property type="term" value="P:dGTP catabolic process"/>
    <property type="evidence" value="ECO:0007669"/>
    <property type="project" value="TreeGrafter"/>
</dbReference>
<dbReference type="CDD" id="cd00077">
    <property type="entry name" value="HDc"/>
    <property type="match status" value="1"/>
</dbReference>
<dbReference type="FunFam" id="1.10.3210.10:FF:000063">
    <property type="entry name" value="Deoxyguanosinetriphosphate triphosphohydrolase-like protein"/>
    <property type="match status" value="1"/>
</dbReference>
<dbReference type="Gene3D" id="1.10.3210.10">
    <property type="entry name" value="Hypothetical protein af1432"/>
    <property type="match status" value="2"/>
</dbReference>
<dbReference type="HAMAP" id="MF_01212">
    <property type="entry name" value="dGTPase_type2"/>
    <property type="match status" value="1"/>
</dbReference>
<dbReference type="InterPro" id="IPR006261">
    <property type="entry name" value="dGTPase"/>
</dbReference>
<dbReference type="InterPro" id="IPR050135">
    <property type="entry name" value="dGTPase-like"/>
</dbReference>
<dbReference type="InterPro" id="IPR023023">
    <property type="entry name" value="dNTPase_2"/>
</dbReference>
<dbReference type="InterPro" id="IPR003607">
    <property type="entry name" value="HD/PDEase_dom"/>
</dbReference>
<dbReference type="InterPro" id="IPR006674">
    <property type="entry name" value="HD_domain"/>
</dbReference>
<dbReference type="InterPro" id="IPR026875">
    <property type="entry name" value="PHydrolase_assoc_dom"/>
</dbReference>
<dbReference type="NCBIfam" id="NF041026">
    <property type="entry name" value="antiphage_dGTPase"/>
    <property type="match status" value="1"/>
</dbReference>
<dbReference type="NCBIfam" id="TIGR01353">
    <property type="entry name" value="dGTP_triPase"/>
    <property type="match status" value="1"/>
</dbReference>
<dbReference type="NCBIfam" id="NF003701">
    <property type="entry name" value="PRK05318.1"/>
    <property type="match status" value="1"/>
</dbReference>
<dbReference type="PANTHER" id="PTHR11373:SF40">
    <property type="entry name" value="DEOXYGUANOSINETRIPHOSPHATE TRIPHOSPHOHYDROLASE-LIKE PROTEIN 2"/>
    <property type="match status" value="1"/>
</dbReference>
<dbReference type="PANTHER" id="PTHR11373">
    <property type="entry name" value="DEOXYNUCLEOSIDE TRIPHOSPHATE TRIPHOSPHOHYDROLASE"/>
    <property type="match status" value="1"/>
</dbReference>
<dbReference type="Pfam" id="PF01966">
    <property type="entry name" value="HD"/>
    <property type="match status" value="1"/>
</dbReference>
<dbReference type="Pfam" id="PF13286">
    <property type="entry name" value="HD_assoc"/>
    <property type="match status" value="1"/>
</dbReference>
<dbReference type="SMART" id="SM00471">
    <property type="entry name" value="HDc"/>
    <property type="match status" value="1"/>
</dbReference>
<dbReference type="SUPFAM" id="SSF109604">
    <property type="entry name" value="HD-domain/PDEase-like"/>
    <property type="match status" value="1"/>
</dbReference>
<dbReference type="PROSITE" id="PS51831">
    <property type="entry name" value="HD"/>
    <property type="match status" value="1"/>
</dbReference>
<comment type="similarity">
    <text evidence="1">Belongs to the dGTPase family. Type 2 subfamily.</text>
</comment>
<sequence length="446" mass="50715">MSSSVWQERRHGEDKQRRNDHRSPFQRDRARILHSAAFRRLQAKTQVLGVGMNDFYRTRLTHSLEVSQIGTGIAAQLSRKYPEHKPLLGSMSLLESLCLAHDIGHPPFGHGGEVALNYMMRHHGGFEGNGQTFRILSKLEPYTEAFGMNLCRRTMLGILKYPAPQSLLFVAGSHPEITNHRQLKPSQWPPVKGIFDDDSDIFDWVLEPLSVADRARFTSVQPSLQPNYPHLRTQFKSFDCSIMELADDIAYAVHDLEDAIVMGIVTASQWQQDVAPTLKHSGDPWIRQELADIGTKLFSHEHHLRKDAIGTLVNGFVTAIIINDDPAFEEPLLRFNASLEPEFANALNVLKQLVFKYVIRKPEIQMLEYKGQQIVMGLFEAFASDPERLLPLNTQERWRTSEQQGQNSHRVLADYISGMTDEFAGRLYQQLFSPKAGSNVELSKEM</sequence>
<name>DGTL1_SHESR</name>
<proteinExistence type="inferred from homology"/>
<evidence type="ECO:0000255" key="1">
    <source>
        <dbReference type="HAMAP-Rule" id="MF_01212"/>
    </source>
</evidence>
<evidence type="ECO:0000255" key="2">
    <source>
        <dbReference type="PROSITE-ProRule" id="PRU01175"/>
    </source>
</evidence>
<evidence type="ECO:0000256" key="3">
    <source>
        <dbReference type="SAM" id="MobiDB-lite"/>
    </source>
</evidence>
<gene>
    <name type="ordered locus">Shewmr7_1933</name>
</gene>
<keyword id="KW-0378">Hydrolase</keyword>
<reference key="1">
    <citation type="submission" date="2006-08" db="EMBL/GenBank/DDBJ databases">
        <title>Complete sequence of chromosome 1 of Shewanella sp. MR-7.</title>
        <authorList>
            <person name="Copeland A."/>
            <person name="Lucas S."/>
            <person name="Lapidus A."/>
            <person name="Barry K."/>
            <person name="Detter J.C."/>
            <person name="Glavina del Rio T."/>
            <person name="Hammon N."/>
            <person name="Israni S."/>
            <person name="Dalin E."/>
            <person name="Tice H."/>
            <person name="Pitluck S."/>
            <person name="Kiss H."/>
            <person name="Brettin T."/>
            <person name="Bruce D."/>
            <person name="Han C."/>
            <person name="Tapia R."/>
            <person name="Gilna P."/>
            <person name="Schmutz J."/>
            <person name="Larimer F."/>
            <person name="Land M."/>
            <person name="Hauser L."/>
            <person name="Kyrpides N."/>
            <person name="Mikhailova N."/>
            <person name="Nealson K."/>
            <person name="Konstantinidis K."/>
            <person name="Klappenbach J."/>
            <person name="Tiedje J."/>
            <person name="Richardson P."/>
        </authorList>
    </citation>
    <scope>NUCLEOTIDE SEQUENCE [LARGE SCALE GENOMIC DNA]</scope>
    <source>
        <strain>MR-7</strain>
    </source>
</reference>
<protein>
    <recommendedName>
        <fullName evidence="1">Deoxyguanosinetriphosphate triphosphohydrolase-like protein</fullName>
    </recommendedName>
</protein>
<organism>
    <name type="scientific">Shewanella sp. (strain MR-7)</name>
    <dbReference type="NCBI Taxonomy" id="60481"/>
    <lineage>
        <taxon>Bacteria</taxon>
        <taxon>Pseudomonadati</taxon>
        <taxon>Pseudomonadota</taxon>
        <taxon>Gammaproteobacteria</taxon>
        <taxon>Alteromonadales</taxon>
        <taxon>Shewanellaceae</taxon>
        <taxon>Shewanella</taxon>
    </lineage>
</organism>